<protein>
    <recommendedName>
        <fullName evidence="1">Nucleoid-associated protein EbfC</fullName>
    </recommendedName>
</protein>
<proteinExistence type="inferred from homology"/>
<sequence>MAVNPLDFLKNMSSVKSNIDNIKKEMSKITVCGKAGSNIVTIEMDGEFNVKKVSINKEFFDDLDNDAFEQMVKSALNDAVSKVKEEIKLKTMGVLPFGM</sequence>
<gene>
    <name evidence="1" type="primary">ebfC</name>
    <name type="ordered locus">BAPKO_0491</name>
    <name type="ordered locus">BafPKo_0480</name>
</gene>
<name>EBFC_BORAP</name>
<dbReference type="EMBL" id="CP000395">
    <property type="protein sequence ID" value="ABH01734.1"/>
    <property type="molecule type" value="Genomic_DNA"/>
</dbReference>
<dbReference type="EMBL" id="CP002933">
    <property type="protein sequence ID" value="AEL69688.1"/>
    <property type="molecule type" value="Genomic_DNA"/>
</dbReference>
<dbReference type="SMR" id="Q0SN44"/>
<dbReference type="STRING" id="29518.BLA32_01945"/>
<dbReference type="KEGG" id="baf:BAPKO_0491"/>
<dbReference type="KEGG" id="bafz:BafPKo_0480"/>
<dbReference type="PATRIC" id="fig|390236.22.peg.459"/>
<dbReference type="eggNOG" id="COG0718">
    <property type="taxonomic scope" value="Bacteria"/>
</dbReference>
<dbReference type="HOGENOM" id="CLU_140930_4_1_12"/>
<dbReference type="OrthoDB" id="350636at2"/>
<dbReference type="Proteomes" id="UP000005216">
    <property type="component" value="Chromosome"/>
</dbReference>
<dbReference type="GO" id="GO:0043590">
    <property type="term" value="C:bacterial nucleoid"/>
    <property type="evidence" value="ECO:0007669"/>
    <property type="project" value="UniProtKB-UniRule"/>
</dbReference>
<dbReference type="GO" id="GO:0005737">
    <property type="term" value="C:cytoplasm"/>
    <property type="evidence" value="ECO:0007669"/>
    <property type="project" value="UniProtKB-UniRule"/>
</dbReference>
<dbReference type="GO" id="GO:0003677">
    <property type="term" value="F:DNA binding"/>
    <property type="evidence" value="ECO:0007669"/>
    <property type="project" value="UniProtKB-UniRule"/>
</dbReference>
<dbReference type="Gene3D" id="3.30.1310.10">
    <property type="entry name" value="Nucleoid-associated protein YbaB-like domain"/>
    <property type="match status" value="1"/>
</dbReference>
<dbReference type="HAMAP" id="MF_00274">
    <property type="entry name" value="DNA_YbaB_EbfC"/>
    <property type="match status" value="1"/>
</dbReference>
<dbReference type="InterPro" id="IPR036894">
    <property type="entry name" value="YbaB-like_sf"/>
</dbReference>
<dbReference type="InterPro" id="IPR004401">
    <property type="entry name" value="YbaB/EbfC"/>
</dbReference>
<dbReference type="NCBIfam" id="TIGR00103">
    <property type="entry name" value="DNA_YbaB_EbfC"/>
    <property type="match status" value="1"/>
</dbReference>
<dbReference type="Pfam" id="PF02575">
    <property type="entry name" value="YbaB_DNA_bd"/>
    <property type="match status" value="1"/>
</dbReference>
<dbReference type="PIRSF" id="PIRSF004555">
    <property type="entry name" value="UCP004555"/>
    <property type="match status" value="1"/>
</dbReference>
<dbReference type="SUPFAM" id="SSF82607">
    <property type="entry name" value="YbaB-like"/>
    <property type="match status" value="1"/>
</dbReference>
<evidence type="ECO:0000255" key="1">
    <source>
        <dbReference type="HAMAP-Rule" id="MF_00274"/>
    </source>
</evidence>
<reference key="1">
    <citation type="journal article" date="2006" name="BMC Genomics">
        <title>Comparative genome analysis: selection pressure on the Borrelia vls cassettes is essential for infectivity.</title>
        <authorList>
            <person name="Gloeckner G."/>
            <person name="Schulte-Spechtel U."/>
            <person name="Schilhabel M."/>
            <person name="Felder M."/>
            <person name="Suehnel J."/>
            <person name="Wilske B."/>
            <person name="Platzer M."/>
        </authorList>
    </citation>
    <scope>NUCLEOTIDE SEQUENCE [LARGE SCALE GENOMIC DNA]</scope>
    <source>
        <strain>PKo</strain>
    </source>
</reference>
<reference key="2">
    <citation type="journal article" date="2011" name="J. Bacteriol.">
        <title>Whole-genome sequences of two Borrelia afzelii and two Borrelia garinii Lyme disease agent isolates.</title>
        <authorList>
            <person name="Casjens S.R."/>
            <person name="Mongodin E.F."/>
            <person name="Qiu W.G."/>
            <person name="Dunn J.J."/>
            <person name="Luft B.J."/>
            <person name="Fraser-Liggett C.M."/>
            <person name="Schutzer S.E."/>
        </authorList>
    </citation>
    <scope>NUCLEOTIDE SEQUENCE [LARGE SCALE GENOMIC DNA]</scope>
    <source>
        <strain>PKo</strain>
    </source>
</reference>
<feature type="chain" id="PRO_1000003692" description="Nucleoid-associated protein EbfC">
    <location>
        <begin position="1"/>
        <end position="99"/>
    </location>
</feature>
<organism>
    <name type="scientific">Borreliella afzelii (strain PKo)</name>
    <name type="common">Borrelia afzelii</name>
    <dbReference type="NCBI Taxonomy" id="390236"/>
    <lineage>
        <taxon>Bacteria</taxon>
        <taxon>Pseudomonadati</taxon>
        <taxon>Spirochaetota</taxon>
        <taxon>Spirochaetia</taxon>
        <taxon>Spirochaetales</taxon>
        <taxon>Borreliaceae</taxon>
        <taxon>Borreliella</taxon>
    </lineage>
</organism>
<accession>Q0SN44</accession>
<accession>G0ISA7</accession>
<keyword id="KW-0963">Cytoplasm</keyword>
<keyword id="KW-0238">DNA-binding</keyword>
<comment type="function">
    <text evidence="1">Binds to DNA and alters its conformation. May be involved in regulation of gene expression, nucleoid organization and DNA protection.</text>
</comment>
<comment type="subunit">
    <text evidence="1">Homodimer.</text>
</comment>
<comment type="subcellular location">
    <subcellularLocation>
        <location evidence="1">Cytoplasm</location>
        <location evidence="1">Nucleoid</location>
    </subcellularLocation>
</comment>
<comment type="similarity">
    <text evidence="1">Belongs to the YbaB/EbfC family.</text>
</comment>